<name>GATA_LACDA</name>
<keyword id="KW-0067">ATP-binding</keyword>
<keyword id="KW-0436">Ligase</keyword>
<keyword id="KW-0547">Nucleotide-binding</keyword>
<keyword id="KW-0648">Protein biosynthesis</keyword>
<keyword id="KW-1185">Reference proteome</keyword>
<feature type="chain" id="PRO_1000015845" description="Glutamyl-tRNA(Gln) amidotransferase subunit A">
    <location>
        <begin position="1"/>
        <end position="480"/>
    </location>
</feature>
<feature type="active site" description="Charge relay system" evidence="1">
    <location>
        <position position="70"/>
    </location>
</feature>
<feature type="active site" description="Charge relay system" evidence="1">
    <location>
        <position position="145"/>
    </location>
</feature>
<feature type="active site" description="Acyl-ester intermediate" evidence="1">
    <location>
        <position position="169"/>
    </location>
</feature>
<comment type="function">
    <text evidence="1">Allows the formation of correctly charged Gln-tRNA(Gln) through the transamidation of misacylated Glu-tRNA(Gln) in organisms which lack glutaminyl-tRNA synthetase. The reaction takes place in the presence of glutamine and ATP through an activated gamma-phospho-Glu-tRNA(Gln).</text>
</comment>
<comment type="catalytic activity">
    <reaction evidence="1">
        <text>L-glutamyl-tRNA(Gln) + L-glutamine + ATP + H2O = L-glutaminyl-tRNA(Gln) + L-glutamate + ADP + phosphate + H(+)</text>
        <dbReference type="Rhea" id="RHEA:17521"/>
        <dbReference type="Rhea" id="RHEA-COMP:9681"/>
        <dbReference type="Rhea" id="RHEA-COMP:9684"/>
        <dbReference type="ChEBI" id="CHEBI:15377"/>
        <dbReference type="ChEBI" id="CHEBI:15378"/>
        <dbReference type="ChEBI" id="CHEBI:29985"/>
        <dbReference type="ChEBI" id="CHEBI:30616"/>
        <dbReference type="ChEBI" id="CHEBI:43474"/>
        <dbReference type="ChEBI" id="CHEBI:58359"/>
        <dbReference type="ChEBI" id="CHEBI:78520"/>
        <dbReference type="ChEBI" id="CHEBI:78521"/>
        <dbReference type="ChEBI" id="CHEBI:456216"/>
        <dbReference type="EC" id="6.3.5.7"/>
    </reaction>
</comment>
<comment type="subunit">
    <text evidence="1">Heterotrimer of A, B and C subunits.</text>
</comment>
<comment type="similarity">
    <text evidence="1">Belongs to the amidase family. GatA subfamily.</text>
</comment>
<proteinExistence type="inferred from homology"/>
<dbReference type="EC" id="6.3.5.7" evidence="1"/>
<dbReference type="EMBL" id="CR954253">
    <property type="protein sequence ID" value="CAI97300.1"/>
    <property type="molecule type" value="Genomic_DNA"/>
</dbReference>
<dbReference type="RefSeq" id="WP_011543667.1">
    <property type="nucleotide sequence ID" value="NC_008054.1"/>
</dbReference>
<dbReference type="SMR" id="Q1GBF4"/>
<dbReference type="STRING" id="390333.Ldb0469"/>
<dbReference type="KEGG" id="ldb:Ldb0469"/>
<dbReference type="PATRIC" id="fig|390333.13.peg.326"/>
<dbReference type="eggNOG" id="COG0154">
    <property type="taxonomic scope" value="Bacteria"/>
</dbReference>
<dbReference type="HOGENOM" id="CLU_009600_0_3_9"/>
<dbReference type="BioCyc" id="LDEL390333:LDB_RS02000-MONOMER"/>
<dbReference type="Proteomes" id="UP000001259">
    <property type="component" value="Chromosome"/>
</dbReference>
<dbReference type="GO" id="GO:0030956">
    <property type="term" value="C:glutamyl-tRNA(Gln) amidotransferase complex"/>
    <property type="evidence" value="ECO:0007669"/>
    <property type="project" value="InterPro"/>
</dbReference>
<dbReference type="GO" id="GO:0005524">
    <property type="term" value="F:ATP binding"/>
    <property type="evidence" value="ECO:0007669"/>
    <property type="project" value="UniProtKB-KW"/>
</dbReference>
<dbReference type="GO" id="GO:0050567">
    <property type="term" value="F:glutaminyl-tRNA synthase (glutamine-hydrolyzing) activity"/>
    <property type="evidence" value="ECO:0007669"/>
    <property type="project" value="UniProtKB-UniRule"/>
</dbReference>
<dbReference type="GO" id="GO:0006412">
    <property type="term" value="P:translation"/>
    <property type="evidence" value="ECO:0007669"/>
    <property type="project" value="UniProtKB-UniRule"/>
</dbReference>
<dbReference type="Gene3D" id="3.90.1300.10">
    <property type="entry name" value="Amidase signature (AS) domain"/>
    <property type="match status" value="1"/>
</dbReference>
<dbReference type="HAMAP" id="MF_00120">
    <property type="entry name" value="GatA"/>
    <property type="match status" value="1"/>
</dbReference>
<dbReference type="InterPro" id="IPR000120">
    <property type="entry name" value="Amidase"/>
</dbReference>
<dbReference type="InterPro" id="IPR020556">
    <property type="entry name" value="Amidase_CS"/>
</dbReference>
<dbReference type="InterPro" id="IPR023631">
    <property type="entry name" value="Amidase_dom"/>
</dbReference>
<dbReference type="InterPro" id="IPR036928">
    <property type="entry name" value="AS_sf"/>
</dbReference>
<dbReference type="InterPro" id="IPR004412">
    <property type="entry name" value="GatA"/>
</dbReference>
<dbReference type="NCBIfam" id="TIGR00132">
    <property type="entry name" value="gatA"/>
    <property type="match status" value="1"/>
</dbReference>
<dbReference type="PANTHER" id="PTHR11895:SF151">
    <property type="entry name" value="GLUTAMYL-TRNA(GLN) AMIDOTRANSFERASE SUBUNIT A"/>
    <property type="match status" value="1"/>
</dbReference>
<dbReference type="PANTHER" id="PTHR11895">
    <property type="entry name" value="TRANSAMIDASE"/>
    <property type="match status" value="1"/>
</dbReference>
<dbReference type="Pfam" id="PF01425">
    <property type="entry name" value="Amidase"/>
    <property type="match status" value="1"/>
</dbReference>
<dbReference type="SUPFAM" id="SSF75304">
    <property type="entry name" value="Amidase signature (AS) enzymes"/>
    <property type="match status" value="1"/>
</dbReference>
<dbReference type="PROSITE" id="PS00571">
    <property type="entry name" value="AMIDASES"/>
    <property type="match status" value="1"/>
</dbReference>
<protein>
    <recommendedName>
        <fullName evidence="1">Glutamyl-tRNA(Gln) amidotransferase subunit A</fullName>
        <shortName evidence="1">Glu-ADT subunit A</shortName>
        <ecNumber evidence="1">6.3.5.7</ecNumber>
    </recommendedName>
</protein>
<organism>
    <name type="scientific">Lactobacillus delbrueckii subsp. bulgaricus (strain ATCC 11842 / DSM 20081 / BCRC 10696 / JCM 1002 / NBRC 13953 / NCIMB 11778 / NCTC 12712 / WDCM 00102 / Lb 14)</name>
    <dbReference type="NCBI Taxonomy" id="390333"/>
    <lineage>
        <taxon>Bacteria</taxon>
        <taxon>Bacillati</taxon>
        <taxon>Bacillota</taxon>
        <taxon>Bacilli</taxon>
        <taxon>Lactobacillales</taxon>
        <taxon>Lactobacillaceae</taxon>
        <taxon>Lactobacillus</taxon>
    </lineage>
</organism>
<gene>
    <name evidence="1" type="primary">gatA</name>
    <name type="ordered locus">Ldb0469</name>
</gene>
<reference key="1">
    <citation type="journal article" date="2006" name="Proc. Natl. Acad. Sci. U.S.A.">
        <title>The complete genome sequence of Lactobacillus bulgaricus reveals extensive and ongoing reductive evolution.</title>
        <authorList>
            <person name="van de Guchte M."/>
            <person name="Penaud S."/>
            <person name="Grimaldi C."/>
            <person name="Barbe V."/>
            <person name="Bryson K."/>
            <person name="Nicolas P."/>
            <person name="Robert C."/>
            <person name="Oztas S."/>
            <person name="Mangenot S."/>
            <person name="Couloux A."/>
            <person name="Loux V."/>
            <person name="Dervyn R."/>
            <person name="Bossy R."/>
            <person name="Bolotin A."/>
            <person name="Batto J.-M."/>
            <person name="Walunas T."/>
            <person name="Gibrat J.-F."/>
            <person name="Bessieres P."/>
            <person name="Weissenbach J."/>
            <person name="Ehrlich S.D."/>
            <person name="Maguin E."/>
        </authorList>
    </citation>
    <scope>NUCLEOTIDE SEQUENCE [LARGE SCALE GENOMIC DNA]</scope>
    <source>
        <strain>ATCC 11842 / DSM 20081 / BCRC 10696 / JCM 1002 / NBRC 13953 / NCIMB 11778 / NCTC 12712 / WDCM 00102 / Lb 14</strain>
    </source>
</reference>
<evidence type="ECO:0000255" key="1">
    <source>
        <dbReference type="HAMAP-Rule" id="MF_00120"/>
    </source>
</evidence>
<sequence length="480" mass="51937">MNYLNETIDSLNDKLKSGAVSADQLVKDTIANIKKTDEKINAFITVDEDAKPAEDLDFNNKLAGVPIAIKDNIITNGLKTTAASHILYNFEPVYESTVVAKLKAAQATIIGKTNMDEFAMGSSTETSYFGDTKNPWNLNKVPGGSSGGSAAAVASGEVVAALGSDTGGSIRQPASFNGIFGIKPTYGRVSRWGLIAFASSLDQIGVMSKRVKDSAEVLNVIAGADDRDATVSEKEVPDYTSFLGKDVKGLRVAVPKEYMSDAVEEGVRKEVEAQIELLRANGAIINEVSLPHTKYVVPTYYIIASSEASANLERYDGIRYGYRAEAKNLDEVFLKSRSEGFGDEVKRRIMLGSFALSAGAYDKFFLQAAKVRTLICQDFDKIFEDNDVIVGPVSTETAFDLNSEISDQIKMYNNDILTISANMAGIPAASVPAGLSETTGMPVGFQIMAKRFDEGHVFQVADFIERSNKFYEQTPAGLED</sequence>
<accession>Q1GBF4</accession>